<organism>
    <name type="scientific">Shewanella baltica (strain OS195)</name>
    <dbReference type="NCBI Taxonomy" id="399599"/>
    <lineage>
        <taxon>Bacteria</taxon>
        <taxon>Pseudomonadati</taxon>
        <taxon>Pseudomonadota</taxon>
        <taxon>Gammaproteobacteria</taxon>
        <taxon>Alteromonadales</taxon>
        <taxon>Shewanellaceae</taxon>
        <taxon>Shewanella</taxon>
    </lineage>
</organism>
<sequence length="286" mass="31438">MAGAKEIKTKIASVKNTQKITSAMEMVAASKMRRAQERMAASRPYAESMRKVIGHVAQGSLEYKHPYLEVREAKRVGYIVVATDRGLCGGLNVNLFKKVIADVKSWKAQGAEFEFCPIGARSVQFFKNFGGQVSAHASGLGDAPKLADLIGTVGVMLEAYNEGKLDRLYVVFNKFVNTMTQTPVIEQLLPLPKSEDDETAHRWDYIYEPDPKALLDTLLVRYVESQVYQGVVENIASEQAARMVAMKSATDNAGELINDLQLVYNKARQAAITQELSEIVSGASAV</sequence>
<gene>
    <name evidence="1" type="primary">atpG</name>
    <name type="ordered locus">Sbal195_4508</name>
</gene>
<proteinExistence type="inferred from homology"/>
<evidence type="ECO:0000255" key="1">
    <source>
        <dbReference type="HAMAP-Rule" id="MF_00815"/>
    </source>
</evidence>
<feature type="chain" id="PRO_1000083808" description="ATP synthase gamma chain">
    <location>
        <begin position="1"/>
        <end position="286"/>
    </location>
</feature>
<name>ATPG_SHEB9</name>
<dbReference type="EMBL" id="CP000891">
    <property type="protein sequence ID" value="ABX51665.1"/>
    <property type="molecule type" value="Genomic_DNA"/>
</dbReference>
<dbReference type="RefSeq" id="WP_006084762.1">
    <property type="nucleotide sequence ID" value="NC_009997.1"/>
</dbReference>
<dbReference type="SMR" id="A9KX07"/>
<dbReference type="GeneID" id="11774461"/>
<dbReference type="KEGG" id="sbn:Sbal195_4508"/>
<dbReference type="HOGENOM" id="CLU_050669_0_1_6"/>
<dbReference type="Proteomes" id="UP000000770">
    <property type="component" value="Chromosome"/>
</dbReference>
<dbReference type="GO" id="GO:0005886">
    <property type="term" value="C:plasma membrane"/>
    <property type="evidence" value="ECO:0007669"/>
    <property type="project" value="UniProtKB-SubCell"/>
</dbReference>
<dbReference type="GO" id="GO:0045259">
    <property type="term" value="C:proton-transporting ATP synthase complex"/>
    <property type="evidence" value="ECO:0007669"/>
    <property type="project" value="UniProtKB-KW"/>
</dbReference>
<dbReference type="GO" id="GO:0005524">
    <property type="term" value="F:ATP binding"/>
    <property type="evidence" value="ECO:0007669"/>
    <property type="project" value="UniProtKB-UniRule"/>
</dbReference>
<dbReference type="GO" id="GO:0046933">
    <property type="term" value="F:proton-transporting ATP synthase activity, rotational mechanism"/>
    <property type="evidence" value="ECO:0007669"/>
    <property type="project" value="UniProtKB-UniRule"/>
</dbReference>
<dbReference type="GO" id="GO:0042777">
    <property type="term" value="P:proton motive force-driven plasma membrane ATP synthesis"/>
    <property type="evidence" value="ECO:0007669"/>
    <property type="project" value="UniProtKB-UniRule"/>
</dbReference>
<dbReference type="CDD" id="cd12151">
    <property type="entry name" value="F1-ATPase_gamma"/>
    <property type="match status" value="1"/>
</dbReference>
<dbReference type="FunFam" id="1.10.287.80:FF:000005">
    <property type="entry name" value="ATP synthase gamma chain"/>
    <property type="match status" value="2"/>
</dbReference>
<dbReference type="FunFam" id="3.40.1380.10:FF:000001">
    <property type="entry name" value="ATP synthase gamma chain"/>
    <property type="match status" value="1"/>
</dbReference>
<dbReference type="Gene3D" id="3.40.1380.10">
    <property type="match status" value="1"/>
</dbReference>
<dbReference type="Gene3D" id="1.10.287.80">
    <property type="entry name" value="ATP synthase, gamma subunit, helix hairpin domain"/>
    <property type="match status" value="2"/>
</dbReference>
<dbReference type="HAMAP" id="MF_00815">
    <property type="entry name" value="ATP_synth_gamma_bact"/>
    <property type="match status" value="1"/>
</dbReference>
<dbReference type="InterPro" id="IPR035968">
    <property type="entry name" value="ATP_synth_F1_ATPase_gsu"/>
</dbReference>
<dbReference type="InterPro" id="IPR000131">
    <property type="entry name" value="ATP_synth_F1_gsu"/>
</dbReference>
<dbReference type="InterPro" id="IPR023632">
    <property type="entry name" value="ATP_synth_F1_gsu_CS"/>
</dbReference>
<dbReference type="NCBIfam" id="TIGR01146">
    <property type="entry name" value="ATPsyn_F1gamma"/>
    <property type="match status" value="1"/>
</dbReference>
<dbReference type="NCBIfam" id="NF004144">
    <property type="entry name" value="PRK05621.1-1"/>
    <property type="match status" value="1"/>
</dbReference>
<dbReference type="PANTHER" id="PTHR11693">
    <property type="entry name" value="ATP SYNTHASE GAMMA CHAIN"/>
    <property type="match status" value="1"/>
</dbReference>
<dbReference type="PANTHER" id="PTHR11693:SF22">
    <property type="entry name" value="ATP SYNTHASE SUBUNIT GAMMA, MITOCHONDRIAL"/>
    <property type="match status" value="1"/>
</dbReference>
<dbReference type="Pfam" id="PF00231">
    <property type="entry name" value="ATP-synt"/>
    <property type="match status" value="1"/>
</dbReference>
<dbReference type="PRINTS" id="PR00126">
    <property type="entry name" value="ATPASEGAMMA"/>
</dbReference>
<dbReference type="SUPFAM" id="SSF52943">
    <property type="entry name" value="ATP synthase (F1-ATPase), gamma subunit"/>
    <property type="match status" value="1"/>
</dbReference>
<dbReference type="PROSITE" id="PS00153">
    <property type="entry name" value="ATPASE_GAMMA"/>
    <property type="match status" value="1"/>
</dbReference>
<accession>A9KX07</accession>
<reference key="1">
    <citation type="submission" date="2007-11" db="EMBL/GenBank/DDBJ databases">
        <title>Complete sequence of chromosome of Shewanella baltica OS195.</title>
        <authorList>
            <consortium name="US DOE Joint Genome Institute"/>
            <person name="Copeland A."/>
            <person name="Lucas S."/>
            <person name="Lapidus A."/>
            <person name="Barry K."/>
            <person name="Glavina del Rio T."/>
            <person name="Dalin E."/>
            <person name="Tice H."/>
            <person name="Pitluck S."/>
            <person name="Chain P."/>
            <person name="Malfatti S."/>
            <person name="Shin M."/>
            <person name="Vergez L."/>
            <person name="Schmutz J."/>
            <person name="Larimer F."/>
            <person name="Land M."/>
            <person name="Hauser L."/>
            <person name="Kyrpides N."/>
            <person name="Kim E."/>
            <person name="Brettar I."/>
            <person name="Rodrigues J."/>
            <person name="Konstantinidis K."/>
            <person name="Klappenbach J."/>
            <person name="Hofle M."/>
            <person name="Tiedje J."/>
            <person name="Richardson P."/>
        </authorList>
    </citation>
    <scope>NUCLEOTIDE SEQUENCE [LARGE SCALE GENOMIC DNA]</scope>
    <source>
        <strain>OS195</strain>
    </source>
</reference>
<comment type="function">
    <text evidence="1">Produces ATP from ADP in the presence of a proton gradient across the membrane. The gamma chain is believed to be important in regulating ATPase activity and the flow of protons through the CF(0) complex.</text>
</comment>
<comment type="subunit">
    <text evidence="1">F-type ATPases have 2 components, CF(1) - the catalytic core - and CF(0) - the membrane proton channel. CF(1) has five subunits: alpha(3), beta(3), gamma(1), delta(1), epsilon(1). CF(0) has three main subunits: a, b and c.</text>
</comment>
<comment type="subcellular location">
    <subcellularLocation>
        <location evidence="1">Cell inner membrane</location>
        <topology evidence="1">Peripheral membrane protein</topology>
    </subcellularLocation>
</comment>
<comment type="similarity">
    <text evidence="1">Belongs to the ATPase gamma chain family.</text>
</comment>
<keyword id="KW-0066">ATP synthesis</keyword>
<keyword id="KW-0997">Cell inner membrane</keyword>
<keyword id="KW-1003">Cell membrane</keyword>
<keyword id="KW-0139">CF(1)</keyword>
<keyword id="KW-0375">Hydrogen ion transport</keyword>
<keyword id="KW-0406">Ion transport</keyword>
<keyword id="KW-0472">Membrane</keyword>
<keyword id="KW-0813">Transport</keyword>
<protein>
    <recommendedName>
        <fullName evidence="1">ATP synthase gamma chain</fullName>
    </recommendedName>
    <alternativeName>
        <fullName evidence="1">ATP synthase F1 sector gamma subunit</fullName>
    </alternativeName>
    <alternativeName>
        <fullName evidence="1">F-ATPase gamma subunit</fullName>
    </alternativeName>
</protein>